<accession>B0CH26</accession>
<evidence type="ECO:0000255" key="1">
    <source>
        <dbReference type="HAMAP-Rule" id="MF_01309"/>
    </source>
</evidence>
<evidence type="ECO:0000256" key="2">
    <source>
        <dbReference type="SAM" id="MobiDB-lite"/>
    </source>
</evidence>
<evidence type="ECO:0000305" key="3"/>
<name>RS3_BRUSI</name>
<feature type="chain" id="PRO_1000086095" description="Small ribosomal subunit protein uS3">
    <location>
        <begin position="1"/>
        <end position="236"/>
    </location>
</feature>
<feature type="domain" description="KH type-2" evidence="1">
    <location>
        <begin position="39"/>
        <end position="107"/>
    </location>
</feature>
<feature type="region of interest" description="Disordered" evidence="2">
    <location>
        <begin position="214"/>
        <end position="236"/>
    </location>
</feature>
<keyword id="KW-0687">Ribonucleoprotein</keyword>
<keyword id="KW-0689">Ribosomal protein</keyword>
<keyword id="KW-0694">RNA-binding</keyword>
<keyword id="KW-0699">rRNA-binding</keyword>
<dbReference type="EMBL" id="CP000911">
    <property type="protein sequence ID" value="ABY38327.1"/>
    <property type="molecule type" value="Genomic_DNA"/>
</dbReference>
<dbReference type="RefSeq" id="WP_006070956.1">
    <property type="nucleotide sequence ID" value="NC_010169.1"/>
</dbReference>
<dbReference type="SMR" id="B0CH26"/>
<dbReference type="KEGG" id="bmt:BSUIS_A1276"/>
<dbReference type="HOGENOM" id="CLU_058591_0_2_5"/>
<dbReference type="Proteomes" id="UP000008545">
    <property type="component" value="Chromosome I"/>
</dbReference>
<dbReference type="GO" id="GO:0022627">
    <property type="term" value="C:cytosolic small ribosomal subunit"/>
    <property type="evidence" value="ECO:0007669"/>
    <property type="project" value="TreeGrafter"/>
</dbReference>
<dbReference type="GO" id="GO:0003729">
    <property type="term" value="F:mRNA binding"/>
    <property type="evidence" value="ECO:0007669"/>
    <property type="project" value="UniProtKB-UniRule"/>
</dbReference>
<dbReference type="GO" id="GO:0019843">
    <property type="term" value="F:rRNA binding"/>
    <property type="evidence" value="ECO:0007669"/>
    <property type="project" value="UniProtKB-UniRule"/>
</dbReference>
<dbReference type="GO" id="GO:0003735">
    <property type="term" value="F:structural constituent of ribosome"/>
    <property type="evidence" value="ECO:0007669"/>
    <property type="project" value="InterPro"/>
</dbReference>
<dbReference type="GO" id="GO:0006412">
    <property type="term" value="P:translation"/>
    <property type="evidence" value="ECO:0007669"/>
    <property type="project" value="UniProtKB-UniRule"/>
</dbReference>
<dbReference type="CDD" id="cd02412">
    <property type="entry name" value="KH-II_30S_S3"/>
    <property type="match status" value="1"/>
</dbReference>
<dbReference type="FunFam" id="3.30.1140.32:FF:000009">
    <property type="entry name" value="30S ribosomal protein S3"/>
    <property type="match status" value="1"/>
</dbReference>
<dbReference type="FunFam" id="3.30.300.20:FF:000001">
    <property type="entry name" value="30S ribosomal protein S3"/>
    <property type="match status" value="1"/>
</dbReference>
<dbReference type="Gene3D" id="3.30.300.20">
    <property type="match status" value="1"/>
</dbReference>
<dbReference type="Gene3D" id="3.30.1140.32">
    <property type="entry name" value="Ribosomal protein S3, C-terminal domain"/>
    <property type="match status" value="1"/>
</dbReference>
<dbReference type="HAMAP" id="MF_01309_B">
    <property type="entry name" value="Ribosomal_uS3_B"/>
    <property type="match status" value="1"/>
</dbReference>
<dbReference type="InterPro" id="IPR004087">
    <property type="entry name" value="KH_dom"/>
</dbReference>
<dbReference type="InterPro" id="IPR015946">
    <property type="entry name" value="KH_dom-like_a/b"/>
</dbReference>
<dbReference type="InterPro" id="IPR004044">
    <property type="entry name" value="KH_dom_type_2"/>
</dbReference>
<dbReference type="InterPro" id="IPR009019">
    <property type="entry name" value="KH_sf_prok-type"/>
</dbReference>
<dbReference type="InterPro" id="IPR036419">
    <property type="entry name" value="Ribosomal_S3_C_sf"/>
</dbReference>
<dbReference type="InterPro" id="IPR005704">
    <property type="entry name" value="Ribosomal_uS3_bac-typ"/>
</dbReference>
<dbReference type="InterPro" id="IPR001351">
    <property type="entry name" value="Ribosomal_uS3_C"/>
</dbReference>
<dbReference type="InterPro" id="IPR018280">
    <property type="entry name" value="Ribosomal_uS3_CS"/>
</dbReference>
<dbReference type="NCBIfam" id="TIGR01009">
    <property type="entry name" value="rpsC_bact"/>
    <property type="match status" value="1"/>
</dbReference>
<dbReference type="PANTHER" id="PTHR11760">
    <property type="entry name" value="30S/40S RIBOSOMAL PROTEIN S3"/>
    <property type="match status" value="1"/>
</dbReference>
<dbReference type="PANTHER" id="PTHR11760:SF19">
    <property type="entry name" value="SMALL RIBOSOMAL SUBUNIT PROTEIN US3C"/>
    <property type="match status" value="1"/>
</dbReference>
<dbReference type="Pfam" id="PF07650">
    <property type="entry name" value="KH_2"/>
    <property type="match status" value="1"/>
</dbReference>
<dbReference type="Pfam" id="PF00189">
    <property type="entry name" value="Ribosomal_S3_C"/>
    <property type="match status" value="1"/>
</dbReference>
<dbReference type="SMART" id="SM00322">
    <property type="entry name" value="KH"/>
    <property type="match status" value="1"/>
</dbReference>
<dbReference type="SUPFAM" id="SSF54814">
    <property type="entry name" value="Prokaryotic type KH domain (KH-domain type II)"/>
    <property type="match status" value="1"/>
</dbReference>
<dbReference type="SUPFAM" id="SSF54821">
    <property type="entry name" value="Ribosomal protein S3 C-terminal domain"/>
    <property type="match status" value="1"/>
</dbReference>
<dbReference type="PROSITE" id="PS50823">
    <property type="entry name" value="KH_TYPE_2"/>
    <property type="match status" value="1"/>
</dbReference>
<dbReference type="PROSITE" id="PS00548">
    <property type="entry name" value="RIBOSOMAL_S3"/>
    <property type="match status" value="1"/>
</dbReference>
<proteinExistence type="inferred from homology"/>
<gene>
    <name evidence="1" type="primary">rpsC</name>
    <name type="ordered locus">BSUIS_A1276</name>
</gene>
<comment type="function">
    <text evidence="1">Binds the lower part of the 30S subunit head. Binds mRNA in the 70S ribosome, positioning it for translation.</text>
</comment>
<comment type="subunit">
    <text evidence="1">Part of the 30S ribosomal subunit. Forms a tight complex with proteins S10 and S14.</text>
</comment>
<comment type="similarity">
    <text evidence="1">Belongs to the universal ribosomal protein uS3 family.</text>
</comment>
<organism>
    <name type="scientific">Brucella suis (strain ATCC 23445 / NCTC 10510)</name>
    <dbReference type="NCBI Taxonomy" id="470137"/>
    <lineage>
        <taxon>Bacteria</taxon>
        <taxon>Pseudomonadati</taxon>
        <taxon>Pseudomonadota</taxon>
        <taxon>Alphaproteobacteria</taxon>
        <taxon>Hyphomicrobiales</taxon>
        <taxon>Brucellaceae</taxon>
        <taxon>Brucella/Ochrobactrum group</taxon>
        <taxon>Brucella</taxon>
    </lineage>
</organism>
<sequence length="236" mass="26618">MGQKINPIGLRLGINRTWDSRWYANTGEYGKLLHEDVKIREFLTEELKQAAISKIVIERPHKKCRVTIHSARPGIIIGKKGADIEKLRKKLSEMTNADTSLNIVEVRKPEVDATLIAQTIAQQLERRVAFRRAMKRAVQSAMRLGAEGIRINCSGRLGGAEIARMEWYREGRVPLHTLRADIDYGTAEAKTAYGICGVKVWVFKGEILEHDPMASERRAVEGDNQGSSSNRRRENA</sequence>
<reference key="1">
    <citation type="submission" date="2007-12" db="EMBL/GenBank/DDBJ databases">
        <title>Brucella suis ATCC 23445 whole genome shotgun sequencing project.</title>
        <authorList>
            <person name="Setubal J.C."/>
            <person name="Bowns C."/>
            <person name="Boyle S."/>
            <person name="Crasta O.R."/>
            <person name="Czar M.J."/>
            <person name="Dharmanolla C."/>
            <person name="Gillespie J.J."/>
            <person name="Kenyon R.W."/>
            <person name="Lu J."/>
            <person name="Mane S."/>
            <person name="Mohapatra S."/>
            <person name="Nagrani S."/>
            <person name="Purkayastha A."/>
            <person name="Rajasimha H.K."/>
            <person name="Shallom J.M."/>
            <person name="Shallom S."/>
            <person name="Shukla M."/>
            <person name="Snyder E.E."/>
            <person name="Sobral B.W."/>
            <person name="Wattam A.R."/>
            <person name="Will R."/>
            <person name="Williams K."/>
            <person name="Yoo H."/>
            <person name="Bruce D."/>
            <person name="Detter C."/>
            <person name="Munk C."/>
            <person name="Brettin T.S."/>
        </authorList>
    </citation>
    <scope>NUCLEOTIDE SEQUENCE [LARGE SCALE GENOMIC DNA]</scope>
    <source>
        <strain>ATCC 23445 / NCTC 10510</strain>
    </source>
</reference>
<protein>
    <recommendedName>
        <fullName evidence="1">Small ribosomal subunit protein uS3</fullName>
    </recommendedName>
    <alternativeName>
        <fullName evidence="3">30S ribosomal protein S3</fullName>
    </alternativeName>
</protein>